<proteinExistence type="evidence at transcript level"/>
<sequence length="306" mass="34424">MLAILFNFFLLTYFTNITLGKVGKSIDLDTRNGYNVHGCYKQTGKIYAHKTYPRQYEAENYNFDDLPVAWDWRNINGVNYASVDRNQHIPQYCGSCWAFGSTSALADRFNIKRKGAWPPAYLSVQEVIDCANAGSCEGGEPGPVYKYAHEFGIPHETCNNYQARDGTCSSYNKCGSCWPGSCFSIKNYTIYRVKNYGAVSGLHKMKAEIYHHGPIACGIAATKAFETYAGGIYNERTNEDIDHIISAHGWGVDSESGVPYWIGRNSWGTPWGENGWFRIVTSEYKNSSSKYNLKIEEDCVWADPIA</sequence>
<keyword id="KW-0968">Cytoplasmic vesicle</keyword>
<keyword id="KW-1015">Disulfide bond</keyword>
<keyword id="KW-0325">Glycoprotein</keyword>
<keyword id="KW-0378">Hydrolase</keyword>
<keyword id="KW-0645">Protease</keyword>
<keyword id="KW-1185">Reference proteome</keyword>
<keyword id="KW-0964">Secreted</keyword>
<keyword id="KW-0732">Signal</keyword>
<keyword id="KW-0788">Thiol protease</keyword>
<keyword id="KW-0865">Zymogen</keyword>
<gene>
    <name evidence="8" type="primary">cpz</name>
</gene>
<comment type="function">
    <text evidence="1 5 11">Exhibits carboxy-monopeptidase as well as carboxy-dipeptidase activity (By similarity). Plays an essential role in molting, a process during larval stages in which a new cuticle is formed and the old cuticle is shed (Probable) (PubMed:15555728). Required for the degradation and shedding of the old cuticle (Probable) (PubMed:15555728).</text>
</comment>
<comment type="catalytic activity">
    <reaction evidence="1">
        <text>Release of C-terminal amino acid residues with broad specificity, but lacks action on C-terminal proline. Shows weak endopeptidase activity.</text>
        <dbReference type="EC" id="3.4.18.1"/>
    </reaction>
</comment>
<comment type="activity regulation">
    <text evidence="1">The disulfide bridge formed between Cys-39 in the propeptide and the active site residue Cys-96 may prevent activation of the zymogen through formation of a reversible covalent bond with the active site residue.</text>
</comment>
<comment type="subcellular location">
    <subcellularLocation>
        <location evidence="7">Cytoplasmic vesicle</location>
        <location evidence="7">Secretory vesicle</location>
    </subcellularLocation>
    <subcellularLocation>
        <location evidence="7">Secreted</location>
    </subcellularLocation>
    <text evidence="7">Localizes in secretory vesicles in the hypodermis of L3 larvae.</text>
</comment>
<comment type="developmental stage">
    <text evidence="5 6 7">Expressed in larvae during the L3/L4 molting stage, specifically in both the old and new cuticles (PubMed:15555728, PubMed:16186127, PubMed:8939969). In L3 larvae, expressed in the hypodermis, the basal lamina of the pseudocoelom, the glandular part of the esophagus and in cells of the epidermal cord (PubMed:15555728, PubMed:8939969).</text>
</comment>
<comment type="disruption phenotype">
    <text evidence="5">RNAi-mediated knockdown in L3 larvae impairs the separation between the L3 cuticle and the newly synthesized L4 cuticle resulting in incomplete molting.</text>
</comment>
<comment type="similarity">
    <text evidence="2 4">Belongs to the peptidase C1 family.</text>
</comment>
<dbReference type="EC" id="3.4.18.1" evidence="1"/>
<dbReference type="EMBL" id="U71150">
    <property type="protein sequence ID" value="AAC47348.1"/>
    <property type="molecule type" value="mRNA"/>
</dbReference>
<dbReference type="EMBL" id="AY591516">
    <property type="protein sequence ID" value="AAT00789.1"/>
    <property type="molecule type" value="Genomic_DNA"/>
</dbReference>
<dbReference type="EMBL" id="CMVM020000017">
    <property type="status" value="NOT_ANNOTATED_CDS"/>
    <property type="molecule type" value="Genomic_DNA"/>
</dbReference>
<dbReference type="SMR" id="Q6PN98"/>
<dbReference type="STRING" id="6282.Q6PN98"/>
<dbReference type="MEROPS" id="C01.087"/>
<dbReference type="GlyCosmos" id="Q6PN98">
    <property type="glycosylation" value="2 sites, No reported glycans"/>
</dbReference>
<dbReference type="HOGENOM" id="CLU_012184_2_1_1"/>
<dbReference type="Proteomes" id="UP000024404">
    <property type="component" value="Unassembled WGS sequence"/>
</dbReference>
<dbReference type="GO" id="GO:0005615">
    <property type="term" value="C:extracellular space"/>
    <property type="evidence" value="ECO:0000314"/>
    <property type="project" value="UniProtKB"/>
</dbReference>
<dbReference type="GO" id="GO:0099503">
    <property type="term" value="C:secretory vesicle"/>
    <property type="evidence" value="ECO:0000314"/>
    <property type="project" value="UniProtKB"/>
</dbReference>
<dbReference type="GO" id="GO:0030133">
    <property type="term" value="C:transport vesicle"/>
    <property type="evidence" value="ECO:0007669"/>
    <property type="project" value="UniProtKB-SubCell"/>
</dbReference>
<dbReference type="GO" id="GO:0016807">
    <property type="term" value="F:cysteine-type carboxypeptidase activity"/>
    <property type="evidence" value="ECO:0007669"/>
    <property type="project" value="UniProtKB-EC"/>
</dbReference>
<dbReference type="GO" id="GO:0042395">
    <property type="term" value="P:ecdysis, collagen and cuticulin-based cuticle"/>
    <property type="evidence" value="ECO:0000315"/>
    <property type="project" value="UniProtKB"/>
</dbReference>
<dbReference type="GO" id="GO:0006508">
    <property type="term" value="P:proteolysis"/>
    <property type="evidence" value="ECO:0007669"/>
    <property type="project" value="UniProtKB-KW"/>
</dbReference>
<dbReference type="CDD" id="cd02698">
    <property type="entry name" value="Peptidase_C1A_CathepsinX"/>
    <property type="match status" value="1"/>
</dbReference>
<dbReference type="FunFam" id="3.90.70.10:FF:000060">
    <property type="entry name" value="Cathepsin Z"/>
    <property type="match status" value="1"/>
</dbReference>
<dbReference type="Gene3D" id="3.90.70.10">
    <property type="entry name" value="Cysteine proteinases"/>
    <property type="match status" value="1"/>
</dbReference>
<dbReference type="InterPro" id="IPR033157">
    <property type="entry name" value="CTSZ"/>
</dbReference>
<dbReference type="InterPro" id="IPR038765">
    <property type="entry name" value="Papain-like_cys_pep_sf"/>
</dbReference>
<dbReference type="InterPro" id="IPR025661">
    <property type="entry name" value="Pept_asp_AS"/>
</dbReference>
<dbReference type="InterPro" id="IPR013128">
    <property type="entry name" value="Peptidase_C1A"/>
</dbReference>
<dbReference type="InterPro" id="IPR000668">
    <property type="entry name" value="Peptidase_C1A_C"/>
</dbReference>
<dbReference type="PANTHER" id="PTHR12411">
    <property type="entry name" value="CYSTEINE PROTEASE FAMILY C1-RELATED"/>
    <property type="match status" value="1"/>
</dbReference>
<dbReference type="Pfam" id="PF00112">
    <property type="entry name" value="Peptidase_C1"/>
    <property type="match status" value="1"/>
</dbReference>
<dbReference type="SMART" id="SM00645">
    <property type="entry name" value="Pept_C1"/>
    <property type="match status" value="1"/>
</dbReference>
<dbReference type="SUPFAM" id="SSF54001">
    <property type="entry name" value="Cysteine proteinases"/>
    <property type="match status" value="1"/>
</dbReference>
<dbReference type="PROSITE" id="PS00640">
    <property type="entry name" value="THIOL_PROTEASE_ASN"/>
    <property type="match status" value="1"/>
</dbReference>
<protein>
    <recommendedName>
        <fullName evidence="10">Cathepsin Z</fullName>
        <ecNumber evidence="1">3.4.18.1</ecNumber>
    </recommendedName>
    <alternativeName>
        <fullName evidence="9">L3 cysteine protease</fullName>
        <shortName evidence="9">LOVCP</shortName>
    </alternativeName>
</protein>
<feature type="signal peptide" evidence="2">
    <location>
        <begin position="1"/>
        <end position="20"/>
    </location>
</feature>
<feature type="propeptide" id="PRO_0000447511" description="Activation peptide" evidence="1">
    <location>
        <begin position="21"/>
        <end position="65"/>
    </location>
</feature>
<feature type="chain" id="PRO_5005400853" description="Cathepsin Z" evidence="2">
    <location>
        <begin position="66"/>
        <end position="306"/>
    </location>
</feature>
<feature type="active site" evidence="1">
    <location>
        <position position="96"/>
    </location>
</feature>
<feature type="active site" evidence="1">
    <location>
        <position position="243"/>
    </location>
</feature>
<feature type="active site" evidence="1">
    <location>
        <position position="265"/>
    </location>
</feature>
<feature type="glycosylation site" description="N-linked (GlcNAc...) asparagine" evidence="3">
    <location>
        <position position="187"/>
    </location>
</feature>
<feature type="glycosylation site" description="N-linked (GlcNAc...) asparagine" evidence="3">
    <location>
        <position position="286"/>
    </location>
</feature>
<feature type="disulfide bond" evidence="1">
    <location>
        <begin position="39"/>
        <end position="96"/>
    </location>
</feature>
<feature type="disulfide bond" evidence="1">
    <location>
        <begin position="93"/>
        <end position="136"/>
    </location>
</feature>
<feature type="disulfide bond" evidence="1">
    <location>
        <begin position="130"/>
        <end position="168"/>
    </location>
</feature>
<feature type="disulfide bond" evidence="1">
    <location>
        <begin position="158"/>
        <end position="174"/>
    </location>
</feature>
<feature type="disulfide bond" evidence="1">
    <location>
        <begin position="177"/>
        <end position="182"/>
    </location>
</feature>
<feature type="disulfide bond" evidence="1">
    <location>
        <begin position="217"/>
        <end position="299"/>
    </location>
</feature>
<feature type="sequence conflict" description="In Ref. 2; AAC47348." evidence="10" ref="2">
    <original>A</original>
    <variation>V</variation>
    <location>
        <position position="247"/>
    </location>
</feature>
<evidence type="ECO:0000250" key="1">
    <source>
        <dbReference type="UniProtKB" id="Q9UBR2"/>
    </source>
</evidence>
<evidence type="ECO:0000255" key="2"/>
<evidence type="ECO:0000255" key="3">
    <source>
        <dbReference type="PROSITE-ProRule" id="PRU00498"/>
    </source>
</evidence>
<evidence type="ECO:0000255" key="4">
    <source>
        <dbReference type="RuleBase" id="RU362133"/>
    </source>
</evidence>
<evidence type="ECO:0000269" key="5">
    <source>
    </source>
</evidence>
<evidence type="ECO:0000269" key="6">
    <source>
    </source>
</evidence>
<evidence type="ECO:0000269" key="7">
    <source>
    </source>
</evidence>
<evidence type="ECO:0000303" key="8">
    <source>
    </source>
</evidence>
<evidence type="ECO:0000303" key="9">
    <source>
    </source>
</evidence>
<evidence type="ECO:0000305" key="10"/>
<evidence type="ECO:0000305" key="11">
    <source>
    </source>
</evidence>
<evidence type="ECO:0000312" key="12">
    <source>
        <dbReference type="EMBL" id="AAC47348.1"/>
    </source>
</evidence>
<evidence type="ECO:0000312" key="13">
    <source>
        <dbReference type="EMBL" id="AAT00789.1"/>
    </source>
</evidence>
<evidence type="ECO:0000312" key="14">
    <source>
        <dbReference type="Proteomes" id="UP000024404"/>
    </source>
</evidence>
<name>CATZ_ONCVO</name>
<organism evidence="13">
    <name type="scientific">Onchocerca volvulus</name>
    <dbReference type="NCBI Taxonomy" id="6282"/>
    <lineage>
        <taxon>Eukaryota</taxon>
        <taxon>Metazoa</taxon>
        <taxon>Ecdysozoa</taxon>
        <taxon>Nematoda</taxon>
        <taxon>Chromadorea</taxon>
        <taxon>Rhabditida</taxon>
        <taxon>Spirurina</taxon>
        <taxon>Spiruromorpha</taxon>
        <taxon>Filarioidea</taxon>
        <taxon>Onchocercidae</taxon>
        <taxon>Onchocerca</taxon>
    </lineage>
</organism>
<reference evidence="12" key="1">
    <citation type="journal article" date="1996" name="J. Biol. Chem.">
        <title>Cloning of a cysteine protease required for the molting of Onchocerca volvulus third stage larvae.</title>
        <authorList>
            <person name="Lustigman S."/>
            <person name="McKerrow J.H."/>
            <person name="Shah K."/>
            <person name="Lui J."/>
            <person name="Huima T."/>
            <person name="Hough M."/>
            <person name="Brotman B."/>
        </authorList>
    </citation>
    <scope>NUCLEOTIDE SEQUENCE [GENOMIC DNA / MRNA]</scope>
    <scope>FUNCTION</scope>
    <scope>SUBCELLULAR LOCATION</scope>
    <scope>DEVELOPMENTAL STAGE</scope>
</reference>
<reference evidence="12" key="2">
    <citation type="journal article" date="2005" name="J. Biol. Chem.">
        <title>Characterization of a novel filarial serine protease inhibitor, Ov-SPI-1, from Onchocerca volvulus, with potential multifunctional roles during development of the parasite.</title>
        <authorList>
            <person name="Ford L."/>
            <person name="Guiliano D.B."/>
            <person name="Oksov Y."/>
            <person name="Debnath A.K."/>
            <person name="Liu J."/>
            <person name="Williams S.A."/>
            <person name="Blaxter M.L."/>
            <person name="Lustigman S."/>
        </authorList>
    </citation>
    <scope>NUCLEOTIDE SEQUENCE [MRNA]</scope>
    <scope>DEVELOPMENTAL STAGE</scope>
    <source>
        <strain evidence="12">Forest</strain>
    </source>
</reference>
<reference evidence="13" key="3">
    <citation type="journal article" date="2004" name="Mol. Biochem. Parasitol.">
        <title>RNA interference targeting cathepsin L and Z-like cysteine proteases of Onchocerca volvulus confirmed their essential function during L3 molting.</title>
        <authorList>
            <person name="Lustigman S."/>
            <person name="Zhang J."/>
            <person name="Liu J."/>
            <person name="Oksov Y."/>
            <person name="Hashmi S."/>
        </authorList>
    </citation>
    <scope>NUCLEOTIDE SEQUENCE [GENOMIC DNA]</scope>
    <scope>FUNCTION</scope>
    <scope>DISRUPTION PHENOTYPE</scope>
</reference>
<reference evidence="14" key="4">
    <citation type="submission" date="2013-10" db="EMBL/GenBank/DDBJ databases">
        <title>Genome sequencing of Onchocerca volvulus.</title>
        <authorList>
            <person name="Cotton J."/>
            <person name="Tsai J."/>
            <person name="Stanley E."/>
            <person name="Tracey A."/>
            <person name="Holroyd N."/>
            <person name="Lustigman S."/>
            <person name="Berriman M."/>
        </authorList>
    </citation>
    <scope>NUCLEOTIDE SEQUENCE [LARGE SCALE GENOMIC DNA]</scope>
</reference>
<reference key="5">
    <citation type="journal article" date="2004" name="J. Biol. Chem.">
        <title>The Caenorhabditis elegans cathepsin Z-like cysteine protease, Ce-CPZ-1, has a multifunctional role during the worms' development.</title>
        <authorList>
            <person name="Hashmi S."/>
            <person name="Zhang J."/>
            <person name="Oksov Y."/>
            <person name="Lustigman S."/>
        </authorList>
    </citation>
    <scope>GENE NAME</scope>
</reference>
<accession>Q6PN98</accession>
<accession>A0A2K6VYR4</accession>
<accession>P91771</accession>